<reference key="1">
    <citation type="journal article" date="2010" name="Genome Biol. Evol.">
        <title>Continuing evolution of Burkholderia mallei through genome reduction and large-scale rearrangements.</title>
        <authorList>
            <person name="Losada L."/>
            <person name="Ronning C.M."/>
            <person name="DeShazer D."/>
            <person name="Woods D."/>
            <person name="Fedorova N."/>
            <person name="Kim H.S."/>
            <person name="Shabalina S.A."/>
            <person name="Pearson T.R."/>
            <person name="Brinkac L."/>
            <person name="Tan P."/>
            <person name="Nandi T."/>
            <person name="Crabtree J."/>
            <person name="Badger J."/>
            <person name="Beckstrom-Sternberg S."/>
            <person name="Saqib M."/>
            <person name="Schutzer S.E."/>
            <person name="Keim P."/>
            <person name="Nierman W.C."/>
        </authorList>
    </citation>
    <scope>NUCLEOTIDE SEQUENCE [LARGE SCALE GENOMIC DNA]</scope>
    <source>
        <strain>SAVP1</strain>
    </source>
</reference>
<comment type="function">
    <text evidence="1">Promotes RNA polymerase assembly. Latches the N- and C-terminal regions of the beta' subunit thereby facilitating its interaction with the beta and alpha subunits.</text>
</comment>
<comment type="catalytic activity">
    <reaction evidence="1">
        <text>RNA(n) + a ribonucleoside 5'-triphosphate = RNA(n+1) + diphosphate</text>
        <dbReference type="Rhea" id="RHEA:21248"/>
        <dbReference type="Rhea" id="RHEA-COMP:14527"/>
        <dbReference type="Rhea" id="RHEA-COMP:17342"/>
        <dbReference type="ChEBI" id="CHEBI:33019"/>
        <dbReference type="ChEBI" id="CHEBI:61557"/>
        <dbReference type="ChEBI" id="CHEBI:140395"/>
        <dbReference type="EC" id="2.7.7.6"/>
    </reaction>
</comment>
<comment type="subunit">
    <text evidence="1">The RNAP catalytic core consists of 2 alpha, 1 beta, 1 beta' and 1 omega subunit. When a sigma factor is associated with the core the holoenzyme is formed, which can initiate transcription.</text>
</comment>
<comment type="similarity">
    <text evidence="1">Belongs to the RNA polymerase subunit omega family.</text>
</comment>
<evidence type="ECO:0000255" key="1">
    <source>
        <dbReference type="HAMAP-Rule" id="MF_00366"/>
    </source>
</evidence>
<protein>
    <recommendedName>
        <fullName evidence="1">DNA-directed RNA polymerase subunit omega</fullName>
        <shortName evidence="1">RNAP omega subunit</shortName>
        <ecNumber evidence="1">2.7.7.6</ecNumber>
    </recommendedName>
    <alternativeName>
        <fullName evidence="1">RNA polymerase omega subunit</fullName>
    </alternativeName>
    <alternativeName>
        <fullName evidence="1">Transcriptase subunit omega</fullName>
    </alternativeName>
</protein>
<sequence>MARITVEDCLKQIPNRFELALAATYRARQLAQGHTPKIESRDKPTVVALREIAAGQVGVEMLKKVPA</sequence>
<feature type="chain" id="PRO_1000005901" description="DNA-directed RNA polymerase subunit omega">
    <location>
        <begin position="1"/>
        <end position="67"/>
    </location>
</feature>
<organism>
    <name type="scientific">Burkholderia mallei (strain SAVP1)</name>
    <dbReference type="NCBI Taxonomy" id="320388"/>
    <lineage>
        <taxon>Bacteria</taxon>
        <taxon>Pseudomonadati</taxon>
        <taxon>Pseudomonadota</taxon>
        <taxon>Betaproteobacteria</taxon>
        <taxon>Burkholderiales</taxon>
        <taxon>Burkholderiaceae</taxon>
        <taxon>Burkholderia</taxon>
        <taxon>pseudomallei group</taxon>
    </lineage>
</organism>
<gene>
    <name evidence="1" type="primary">rpoZ</name>
    <name type="ordered locus">BMASAVP1_A0816</name>
</gene>
<dbReference type="EC" id="2.7.7.6" evidence="1"/>
<dbReference type="EMBL" id="CP000526">
    <property type="protein sequence ID" value="ABM49943.1"/>
    <property type="molecule type" value="Genomic_DNA"/>
</dbReference>
<dbReference type="RefSeq" id="WP_004185855.1">
    <property type="nucleotide sequence ID" value="NC_008785.1"/>
</dbReference>
<dbReference type="SMR" id="A1V1Q6"/>
<dbReference type="GeneID" id="93061155"/>
<dbReference type="KEGG" id="bmv:BMASAVP1_A0816"/>
<dbReference type="HOGENOM" id="CLU_125406_5_2_4"/>
<dbReference type="GO" id="GO:0000428">
    <property type="term" value="C:DNA-directed RNA polymerase complex"/>
    <property type="evidence" value="ECO:0007669"/>
    <property type="project" value="UniProtKB-KW"/>
</dbReference>
<dbReference type="GO" id="GO:0003677">
    <property type="term" value="F:DNA binding"/>
    <property type="evidence" value="ECO:0007669"/>
    <property type="project" value="UniProtKB-UniRule"/>
</dbReference>
<dbReference type="GO" id="GO:0003899">
    <property type="term" value="F:DNA-directed RNA polymerase activity"/>
    <property type="evidence" value="ECO:0007669"/>
    <property type="project" value="UniProtKB-UniRule"/>
</dbReference>
<dbReference type="GO" id="GO:0006351">
    <property type="term" value="P:DNA-templated transcription"/>
    <property type="evidence" value="ECO:0007669"/>
    <property type="project" value="UniProtKB-UniRule"/>
</dbReference>
<dbReference type="Gene3D" id="3.90.940.10">
    <property type="match status" value="1"/>
</dbReference>
<dbReference type="HAMAP" id="MF_00366">
    <property type="entry name" value="RNApol_bact_RpoZ"/>
    <property type="match status" value="1"/>
</dbReference>
<dbReference type="InterPro" id="IPR003716">
    <property type="entry name" value="DNA-dir_RNA_pol_omega"/>
</dbReference>
<dbReference type="InterPro" id="IPR006110">
    <property type="entry name" value="Pol_omega/Rpo6/RPB6"/>
</dbReference>
<dbReference type="InterPro" id="IPR036161">
    <property type="entry name" value="RPB6/omega-like_sf"/>
</dbReference>
<dbReference type="NCBIfam" id="TIGR00690">
    <property type="entry name" value="rpoZ"/>
    <property type="match status" value="1"/>
</dbReference>
<dbReference type="PANTHER" id="PTHR34476">
    <property type="entry name" value="DNA-DIRECTED RNA POLYMERASE SUBUNIT OMEGA"/>
    <property type="match status" value="1"/>
</dbReference>
<dbReference type="PANTHER" id="PTHR34476:SF1">
    <property type="entry name" value="DNA-DIRECTED RNA POLYMERASE SUBUNIT OMEGA"/>
    <property type="match status" value="1"/>
</dbReference>
<dbReference type="Pfam" id="PF01192">
    <property type="entry name" value="RNA_pol_Rpb6"/>
    <property type="match status" value="1"/>
</dbReference>
<dbReference type="SMART" id="SM01409">
    <property type="entry name" value="RNA_pol_Rpb6"/>
    <property type="match status" value="1"/>
</dbReference>
<dbReference type="SUPFAM" id="SSF63562">
    <property type="entry name" value="RPB6/omega subunit-like"/>
    <property type="match status" value="1"/>
</dbReference>
<accession>A1V1Q6</accession>
<keyword id="KW-0240">DNA-directed RNA polymerase</keyword>
<keyword id="KW-0548">Nucleotidyltransferase</keyword>
<keyword id="KW-0804">Transcription</keyword>
<keyword id="KW-0808">Transferase</keyword>
<name>RPOZ_BURMS</name>
<proteinExistence type="inferred from homology"/>